<evidence type="ECO:0000255" key="1">
    <source>
        <dbReference type="HAMAP-Rule" id="MF_00148"/>
    </source>
</evidence>
<accession>B7I526</accession>
<protein>
    <recommendedName>
        <fullName evidence="1">Uracil-DNA glycosylase</fullName>
        <shortName evidence="1">UDG</shortName>
        <ecNumber evidence="1">3.2.2.27</ecNumber>
    </recommendedName>
</protein>
<keyword id="KW-0963">Cytoplasm</keyword>
<keyword id="KW-0227">DNA damage</keyword>
<keyword id="KW-0234">DNA repair</keyword>
<keyword id="KW-0378">Hydrolase</keyword>
<organism>
    <name type="scientific">Acinetobacter baumannii (strain AB0057)</name>
    <dbReference type="NCBI Taxonomy" id="480119"/>
    <lineage>
        <taxon>Bacteria</taxon>
        <taxon>Pseudomonadati</taxon>
        <taxon>Pseudomonadota</taxon>
        <taxon>Gammaproteobacteria</taxon>
        <taxon>Moraxellales</taxon>
        <taxon>Moraxellaceae</taxon>
        <taxon>Acinetobacter</taxon>
        <taxon>Acinetobacter calcoaceticus/baumannii complex</taxon>
    </lineage>
</organism>
<comment type="function">
    <text evidence="1">Excises uracil residues from the DNA which can arise as a result of misincorporation of dUMP residues by DNA polymerase or due to deamination of cytosine.</text>
</comment>
<comment type="catalytic activity">
    <reaction evidence="1">
        <text>Hydrolyzes single-stranded DNA or mismatched double-stranded DNA and polynucleotides, releasing free uracil.</text>
        <dbReference type="EC" id="3.2.2.27"/>
    </reaction>
</comment>
<comment type="subcellular location">
    <subcellularLocation>
        <location evidence="1">Cytoplasm</location>
    </subcellularLocation>
</comment>
<comment type="similarity">
    <text evidence="1">Belongs to the uracil-DNA glycosylase (UDG) superfamily. UNG family.</text>
</comment>
<sequence>MQLTEQQQDKLSKVQLEESWKRSLTPFLLSPYMDSLRDFLFQQKQAQKTIYPPSKQIFNALNITPLDHVKVVILGQDPYHGPNQANGLSFSVQRGVALPPSLRNIFHELHTDLGVPISRHGDLTKWAEQGVLLLNSVLTVEAGQPTSHQKQGWEEFTDAVIDVLNEQREHIVFILWGAYAQRKGQRINREKHLVLTAAHPSPLAANRGGFFGCKVFSKTNQYLKQHGIEPIDWQLDA</sequence>
<reference key="1">
    <citation type="journal article" date="2008" name="J. Bacteriol.">
        <title>Comparative genome sequence analysis of multidrug-resistant Acinetobacter baumannii.</title>
        <authorList>
            <person name="Adams M.D."/>
            <person name="Goglin K."/>
            <person name="Molyneaux N."/>
            <person name="Hujer K.M."/>
            <person name="Lavender H."/>
            <person name="Jamison J.J."/>
            <person name="MacDonald I.J."/>
            <person name="Martin K.M."/>
            <person name="Russo T."/>
            <person name="Campagnari A.A."/>
            <person name="Hujer A.M."/>
            <person name="Bonomo R.A."/>
            <person name="Gill S.R."/>
        </authorList>
    </citation>
    <scope>NUCLEOTIDE SEQUENCE [LARGE SCALE GENOMIC DNA]</scope>
    <source>
        <strain>AB0057</strain>
    </source>
</reference>
<gene>
    <name evidence="1" type="primary">ung</name>
    <name type="ordered locus">AB57_1812</name>
</gene>
<dbReference type="EC" id="3.2.2.27" evidence="1"/>
<dbReference type="EMBL" id="CP001182">
    <property type="protein sequence ID" value="ACJ41191.1"/>
    <property type="molecule type" value="Genomic_DNA"/>
</dbReference>
<dbReference type="RefSeq" id="WP_001177527.1">
    <property type="nucleotide sequence ID" value="NC_011586.2"/>
</dbReference>
<dbReference type="SMR" id="B7I526"/>
<dbReference type="KEGG" id="abn:AB57_1812"/>
<dbReference type="HOGENOM" id="CLU_032162_3_0_6"/>
<dbReference type="Proteomes" id="UP000007094">
    <property type="component" value="Chromosome"/>
</dbReference>
<dbReference type="GO" id="GO:0005737">
    <property type="term" value="C:cytoplasm"/>
    <property type="evidence" value="ECO:0007669"/>
    <property type="project" value="UniProtKB-SubCell"/>
</dbReference>
<dbReference type="GO" id="GO:0004844">
    <property type="term" value="F:uracil DNA N-glycosylase activity"/>
    <property type="evidence" value="ECO:0007669"/>
    <property type="project" value="UniProtKB-UniRule"/>
</dbReference>
<dbReference type="GO" id="GO:0097510">
    <property type="term" value="P:base-excision repair, AP site formation via deaminated base removal"/>
    <property type="evidence" value="ECO:0007669"/>
    <property type="project" value="TreeGrafter"/>
</dbReference>
<dbReference type="CDD" id="cd10027">
    <property type="entry name" value="UDG-F1-like"/>
    <property type="match status" value="1"/>
</dbReference>
<dbReference type="FunFam" id="3.40.470.10:FF:000001">
    <property type="entry name" value="Uracil-DNA glycosylase"/>
    <property type="match status" value="1"/>
</dbReference>
<dbReference type="Gene3D" id="3.40.470.10">
    <property type="entry name" value="Uracil-DNA glycosylase-like domain"/>
    <property type="match status" value="1"/>
</dbReference>
<dbReference type="HAMAP" id="MF_00148">
    <property type="entry name" value="UDG"/>
    <property type="match status" value="1"/>
</dbReference>
<dbReference type="InterPro" id="IPR002043">
    <property type="entry name" value="UDG_fam1"/>
</dbReference>
<dbReference type="InterPro" id="IPR018085">
    <property type="entry name" value="Ura-DNA_Glyclase_AS"/>
</dbReference>
<dbReference type="InterPro" id="IPR005122">
    <property type="entry name" value="Uracil-DNA_glycosylase-like"/>
</dbReference>
<dbReference type="InterPro" id="IPR036895">
    <property type="entry name" value="Uracil-DNA_glycosylase-like_sf"/>
</dbReference>
<dbReference type="NCBIfam" id="NF003588">
    <property type="entry name" value="PRK05254.1-1"/>
    <property type="match status" value="1"/>
</dbReference>
<dbReference type="NCBIfam" id="NF003589">
    <property type="entry name" value="PRK05254.1-2"/>
    <property type="match status" value="1"/>
</dbReference>
<dbReference type="NCBIfam" id="NF003591">
    <property type="entry name" value="PRK05254.1-4"/>
    <property type="match status" value="1"/>
</dbReference>
<dbReference type="NCBIfam" id="NF003592">
    <property type="entry name" value="PRK05254.1-5"/>
    <property type="match status" value="1"/>
</dbReference>
<dbReference type="NCBIfam" id="TIGR00628">
    <property type="entry name" value="ung"/>
    <property type="match status" value="1"/>
</dbReference>
<dbReference type="PANTHER" id="PTHR11264">
    <property type="entry name" value="URACIL-DNA GLYCOSYLASE"/>
    <property type="match status" value="1"/>
</dbReference>
<dbReference type="PANTHER" id="PTHR11264:SF0">
    <property type="entry name" value="URACIL-DNA GLYCOSYLASE"/>
    <property type="match status" value="1"/>
</dbReference>
<dbReference type="Pfam" id="PF03167">
    <property type="entry name" value="UDG"/>
    <property type="match status" value="1"/>
</dbReference>
<dbReference type="SMART" id="SM00986">
    <property type="entry name" value="UDG"/>
    <property type="match status" value="1"/>
</dbReference>
<dbReference type="SMART" id="SM00987">
    <property type="entry name" value="UreE_C"/>
    <property type="match status" value="1"/>
</dbReference>
<dbReference type="SUPFAM" id="SSF52141">
    <property type="entry name" value="Uracil-DNA glycosylase-like"/>
    <property type="match status" value="1"/>
</dbReference>
<dbReference type="PROSITE" id="PS00130">
    <property type="entry name" value="U_DNA_GLYCOSYLASE"/>
    <property type="match status" value="1"/>
</dbReference>
<proteinExistence type="inferred from homology"/>
<name>UNG_ACIB5</name>
<feature type="chain" id="PRO_1000199758" description="Uracil-DNA glycosylase">
    <location>
        <begin position="1"/>
        <end position="237"/>
    </location>
</feature>
<feature type="active site" description="Proton acceptor" evidence="1">
    <location>
        <position position="77"/>
    </location>
</feature>